<reference key="1">
    <citation type="journal article" date="2006" name="Mol. Microbiol.">
        <title>Role of pathogenicity island-associated integrases in the genome plasticity of uropathogenic Escherichia coli strain 536.</title>
        <authorList>
            <person name="Hochhut B."/>
            <person name="Wilde C."/>
            <person name="Balling G."/>
            <person name="Middendorf B."/>
            <person name="Dobrindt U."/>
            <person name="Brzuszkiewicz E."/>
            <person name="Gottschalk G."/>
            <person name="Carniel E."/>
            <person name="Hacker J."/>
        </authorList>
    </citation>
    <scope>NUCLEOTIDE SEQUENCE [LARGE SCALE GENOMIC DNA]</scope>
    <source>
        <strain>536 / UPEC</strain>
    </source>
</reference>
<organism>
    <name type="scientific">Escherichia coli O6:K15:H31 (strain 536 / UPEC)</name>
    <dbReference type="NCBI Taxonomy" id="362663"/>
    <lineage>
        <taxon>Bacteria</taxon>
        <taxon>Pseudomonadati</taxon>
        <taxon>Pseudomonadota</taxon>
        <taxon>Gammaproteobacteria</taxon>
        <taxon>Enterobacterales</taxon>
        <taxon>Enterobacteriaceae</taxon>
        <taxon>Escherichia</taxon>
    </lineage>
</organism>
<name>NHAA_ECOL5</name>
<keyword id="KW-0050">Antiport</keyword>
<keyword id="KW-0997">Cell inner membrane</keyword>
<keyword id="KW-1003">Cell membrane</keyword>
<keyword id="KW-0406">Ion transport</keyword>
<keyword id="KW-0472">Membrane</keyword>
<keyword id="KW-0915">Sodium</keyword>
<keyword id="KW-0739">Sodium transport</keyword>
<keyword id="KW-0812">Transmembrane</keyword>
<keyword id="KW-1133">Transmembrane helix</keyword>
<keyword id="KW-0813">Transport</keyword>
<gene>
    <name evidence="1" type="primary">nhaA</name>
    <name type="ordered locus">ECP_0020</name>
</gene>
<comment type="function">
    <text evidence="1">Na(+)/H(+) antiporter that extrudes sodium in exchange for external protons.</text>
</comment>
<comment type="catalytic activity">
    <reaction evidence="1">
        <text>Na(+)(in) + 2 H(+)(out) = Na(+)(out) + 2 H(+)(in)</text>
        <dbReference type="Rhea" id="RHEA:29251"/>
        <dbReference type="ChEBI" id="CHEBI:15378"/>
        <dbReference type="ChEBI" id="CHEBI:29101"/>
    </reaction>
    <physiologicalReaction direction="left-to-right" evidence="1">
        <dbReference type="Rhea" id="RHEA:29252"/>
    </physiologicalReaction>
</comment>
<comment type="subcellular location">
    <subcellularLocation>
        <location evidence="1">Cell inner membrane</location>
        <topology evidence="1">Multi-pass membrane protein</topology>
    </subcellularLocation>
</comment>
<comment type="similarity">
    <text evidence="1">Belongs to the NhaA Na(+)/H(+) (TC 2.A.33) antiporter family.</text>
</comment>
<proteinExistence type="inferred from homology"/>
<protein>
    <recommendedName>
        <fullName evidence="1">Na(+)/H(+) antiporter NhaA</fullName>
    </recommendedName>
    <alternativeName>
        <fullName evidence="1">Sodium/proton antiporter NhaA</fullName>
    </alternativeName>
</protein>
<sequence>MKHLHRFFSSDASGGIILIIAAVLAMIMANSGATSGWYHDFLETPVQLRVGTLEINKNMLLWINDALMAVFFLLVGLEVKRELMQGSLASLRQAAFPVIAAIGGMIVPALLYLAFNYADPITREGWAIPAATDIAFALGVLALLGSRVPLALKIFLMALAIIDDLGAIIIIALFYTNDLSMASLGVAAVAIAVLAVLNLCGVRRTGVYILVGVVLWTAVLKSGVHATLAGVIVGFFIPLKEKHGRSPAKRLEHVLHPWVAYLILPLFAFANAGVSLQGVTLEGLTSILPLGIIAGLLIGKPLGISLFCWLALRLKLAHLPEGTTYQQIMAVGILCGIGFTMSIFIASLAFGSVDPELINWAKLGILVGSISSAVIGYSWLRVRLRPSV</sequence>
<accession>Q0TLW9</accession>
<feature type="chain" id="PRO_0000334289" description="Na(+)/H(+) antiporter NhaA">
    <location>
        <begin position="1"/>
        <end position="388"/>
    </location>
</feature>
<feature type="topological domain" description="Cytoplasmic" evidence="1">
    <location>
        <begin position="1"/>
        <end position="11"/>
    </location>
</feature>
<feature type="transmembrane region" description="Helical; Name=1" evidence="1">
    <location>
        <begin position="12"/>
        <end position="31"/>
    </location>
</feature>
<feature type="topological domain" description="Periplasmic" evidence="1">
    <location>
        <begin position="32"/>
        <end position="58"/>
    </location>
</feature>
<feature type="transmembrane region" description="Helical; Name=2" evidence="1">
    <location>
        <begin position="59"/>
        <end position="80"/>
    </location>
</feature>
<feature type="topological domain" description="Cytoplasmic" evidence="1">
    <location>
        <begin position="81"/>
        <end position="96"/>
    </location>
</feature>
<feature type="transmembrane region" description="Helical; Name=3" evidence="1">
    <location>
        <begin position="97"/>
        <end position="116"/>
    </location>
</feature>
<feature type="topological domain" description="Periplasmic" evidence="1">
    <location>
        <begin position="117"/>
        <end position="122"/>
    </location>
</feature>
<feature type="transmembrane region" description="Helical; Name=4" evidence="1">
    <location>
        <begin position="123"/>
        <end position="130"/>
    </location>
</feature>
<feature type="topological domain" description="Cytoplasmic" evidence="1">
    <location>
        <begin position="131"/>
        <end position="154"/>
    </location>
</feature>
<feature type="transmembrane region" description="Helical; Name=5" evidence="1">
    <location>
        <begin position="155"/>
        <end position="176"/>
    </location>
</feature>
<feature type="topological domain" description="Periplasmic" evidence="1">
    <location>
        <begin position="177"/>
        <end position="180"/>
    </location>
</feature>
<feature type="transmembrane region" description="Helical; Name=6" evidence="1">
    <location>
        <begin position="181"/>
        <end position="200"/>
    </location>
</feature>
<feature type="topological domain" description="Cytoplasmic" evidence="1">
    <location>
        <begin position="201"/>
        <end position="204"/>
    </location>
</feature>
<feature type="transmembrane region" description="Helical; Name=7" evidence="1">
    <location>
        <begin position="205"/>
        <end position="222"/>
    </location>
</feature>
<feature type="topological domain" description="Periplasmic" evidence="1">
    <location>
        <position position="223"/>
    </location>
</feature>
<feature type="transmembrane region" description="Helical; Name=8" evidence="1">
    <location>
        <begin position="224"/>
        <end position="236"/>
    </location>
</feature>
<feature type="topological domain" description="Cytoplasmic" evidence="1">
    <location>
        <begin position="237"/>
        <end position="253"/>
    </location>
</feature>
<feature type="transmembrane region" description="Helical; Name=9" evidence="1">
    <location>
        <begin position="254"/>
        <end position="272"/>
    </location>
</feature>
<feature type="topological domain" description="Periplasmic" evidence="1">
    <location>
        <begin position="273"/>
        <end position="286"/>
    </location>
</feature>
<feature type="transmembrane region" description="Helical; Name=10" evidence="1">
    <location>
        <begin position="287"/>
        <end position="310"/>
    </location>
</feature>
<feature type="topological domain" description="Cytoplasmic" evidence="1">
    <location>
        <begin position="311"/>
        <end position="339"/>
    </location>
</feature>
<feature type="transmembrane region" description="Helical; Name=11" evidence="1">
    <location>
        <begin position="340"/>
        <end position="350"/>
    </location>
</feature>
<feature type="topological domain" description="Periplasmic" evidence="1">
    <location>
        <begin position="351"/>
        <end position="357"/>
    </location>
</feature>
<feature type="transmembrane region" description="Helical; Name=12" evidence="1">
    <location>
        <begin position="358"/>
        <end position="380"/>
    </location>
</feature>
<feature type="topological domain" description="Cytoplasmic" evidence="1">
    <location>
        <begin position="381"/>
        <end position="388"/>
    </location>
</feature>
<dbReference type="EMBL" id="CP000247">
    <property type="protein sequence ID" value="ABG68062.1"/>
    <property type="molecule type" value="Genomic_DNA"/>
</dbReference>
<dbReference type="RefSeq" id="WP_000681384.1">
    <property type="nucleotide sequence ID" value="NC_008253.1"/>
</dbReference>
<dbReference type="SMR" id="Q0TLW9"/>
<dbReference type="KEGG" id="ecp:ECP_0020"/>
<dbReference type="HOGENOM" id="CLU_015803_1_0_6"/>
<dbReference type="Proteomes" id="UP000009182">
    <property type="component" value="Chromosome"/>
</dbReference>
<dbReference type="GO" id="GO:0005886">
    <property type="term" value="C:plasma membrane"/>
    <property type="evidence" value="ECO:0007669"/>
    <property type="project" value="UniProtKB-SubCell"/>
</dbReference>
<dbReference type="GO" id="GO:0015385">
    <property type="term" value="F:sodium:proton antiporter activity"/>
    <property type="evidence" value="ECO:0007669"/>
    <property type="project" value="TreeGrafter"/>
</dbReference>
<dbReference type="GO" id="GO:0006885">
    <property type="term" value="P:regulation of pH"/>
    <property type="evidence" value="ECO:0007669"/>
    <property type="project" value="InterPro"/>
</dbReference>
<dbReference type="FunFam" id="1.20.1530.10:FF:000001">
    <property type="entry name" value="Na(+)/H(+) antiporter NhaA"/>
    <property type="match status" value="1"/>
</dbReference>
<dbReference type="Gene3D" id="1.20.1530.10">
    <property type="entry name" value="Na+/H+ antiporter like domain"/>
    <property type="match status" value="1"/>
</dbReference>
<dbReference type="HAMAP" id="MF_01844">
    <property type="entry name" value="NhaA"/>
    <property type="match status" value="1"/>
</dbReference>
<dbReference type="InterPro" id="IPR023171">
    <property type="entry name" value="Na/H_antiporter_dom_sf"/>
</dbReference>
<dbReference type="InterPro" id="IPR004670">
    <property type="entry name" value="NhaA"/>
</dbReference>
<dbReference type="NCBIfam" id="TIGR00773">
    <property type="entry name" value="NhaA"/>
    <property type="match status" value="1"/>
</dbReference>
<dbReference type="NCBIfam" id="NF007111">
    <property type="entry name" value="PRK09560.1"/>
    <property type="match status" value="1"/>
</dbReference>
<dbReference type="NCBIfam" id="NF007112">
    <property type="entry name" value="PRK09561.1"/>
    <property type="match status" value="1"/>
</dbReference>
<dbReference type="PANTHER" id="PTHR30341:SF0">
    <property type="entry name" value="NA(+)_H(+) ANTIPORTER NHAA"/>
    <property type="match status" value="1"/>
</dbReference>
<dbReference type="PANTHER" id="PTHR30341">
    <property type="entry name" value="SODIUM ION/PROTON ANTIPORTER NHAA-RELATED"/>
    <property type="match status" value="1"/>
</dbReference>
<dbReference type="Pfam" id="PF06965">
    <property type="entry name" value="Na_H_antiport_1"/>
    <property type="match status" value="1"/>
</dbReference>
<evidence type="ECO:0000255" key="1">
    <source>
        <dbReference type="HAMAP-Rule" id="MF_01844"/>
    </source>
</evidence>